<sequence length="577" mass="64336">MNIQALLSEKVSQAMIAAGAPADCEPQVRQSAKVQFGDYQANGMMAVAKKLGMAPRQLAEQVLTHLDLSGIASKVEIAGPGFINIFLEPAFLAEQVQQALTSDRLGVSQPTRQTIVVDYSAPNVAKEMHVGHLRSTIIGDAAVRTLEFLGHHVIRANHVGDWGTQFGMLIAWLEKQQQENAGDMALADLEGFYRDAKKHYDEDEAFAERARNYVVKLQSGDTYFREMWRKLVDITMTQNQITYDRLNVTLTRDDVMGESLYNPMLPGIVADLKAKGLAVESEGATVVFLDEFKNKEGDPMGVIIQKKDGGYLYTTTDIACAKYRYETLHADRVLYYIDSRQHQHLMQAWTIVRKAGYVPDSVPLEHHMFGMMLGKDGKPFKTRTGGTVKLADLLDEALERARRLVAEKNPDMPADELEKLANAVGIGAVKYADLSKNRTTDYIFDWDNMLAFEGNTAPYMQYAYTRVLSVFRKADIDEQALASAPVIISEDREAQLAARLLQFEETLTVVAREGTPHVMCAYLYDVAGLFSGFYEHCPILSAENDAVRNSRLKLAQLTAKTLKLGLDTLGIETVERM</sequence>
<organism>
    <name type="scientific">Salmonella paratyphi A (strain AKU_12601)</name>
    <dbReference type="NCBI Taxonomy" id="554290"/>
    <lineage>
        <taxon>Bacteria</taxon>
        <taxon>Pseudomonadati</taxon>
        <taxon>Pseudomonadota</taxon>
        <taxon>Gammaproteobacteria</taxon>
        <taxon>Enterobacterales</taxon>
        <taxon>Enterobacteriaceae</taxon>
        <taxon>Salmonella</taxon>
    </lineage>
</organism>
<keyword id="KW-0030">Aminoacyl-tRNA synthetase</keyword>
<keyword id="KW-0067">ATP-binding</keyword>
<keyword id="KW-0963">Cytoplasm</keyword>
<keyword id="KW-0436">Ligase</keyword>
<keyword id="KW-0547">Nucleotide-binding</keyword>
<keyword id="KW-0648">Protein biosynthesis</keyword>
<dbReference type="EC" id="6.1.1.19" evidence="1"/>
<dbReference type="EMBL" id="FM200053">
    <property type="protein sequence ID" value="CAR59038.1"/>
    <property type="molecule type" value="Genomic_DNA"/>
</dbReference>
<dbReference type="RefSeq" id="WP_001025370.1">
    <property type="nucleotide sequence ID" value="NC_011147.1"/>
</dbReference>
<dbReference type="SMR" id="B5BH46"/>
<dbReference type="KEGG" id="sek:SSPA0894"/>
<dbReference type="HOGENOM" id="CLU_006406_5_1_6"/>
<dbReference type="Proteomes" id="UP000001869">
    <property type="component" value="Chromosome"/>
</dbReference>
<dbReference type="GO" id="GO:0005737">
    <property type="term" value="C:cytoplasm"/>
    <property type="evidence" value="ECO:0007669"/>
    <property type="project" value="UniProtKB-SubCell"/>
</dbReference>
<dbReference type="GO" id="GO:0004814">
    <property type="term" value="F:arginine-tRNA ligase activity"/>
    <property type="evidence" value="ECO:0007669"/>
    <property type="project" value="UniProtKB-UniRule"/>
</dbReference>
<dbReference type="GO" id="GO:0005524">
    <property type="term" value="F:ATP binding"/>
    <property type="evidence" value="ECO:0007669"/>
    <property type="project" value="UniProtKB-UniRule"/>
</dbReference>
<dbReference type="GO" id="GO:0006420">
    <property type="term" value="P:arginyl-tRNA aminoacylation"/>
    <property type="evidence" value="ECO:0007669"/>
    <property type="project" value="UniProtKB-UniRule"/>
</dbReference>
<dbReference type="CDD" id="cd07956">
    <property type="entry name" value="Anticodon_Ia_Arg"/>
    <property type="match status" value="1"/>
</dbReference>
<dbReference type="CDD" id="cd00671">
    <property type="entry name" value="ArgRS_core"/>
    <property type="match status" value="1"/>
</dbReference>
<dbReference type="FunFam" id="1.10.730.10:FF:000001">
    <property type="entry name" value="Arginine--tRNA ligase"/>
    <property type="match status" value="1"/>
</dbReference>
<dbReference type="FunFam" id="3.30.1360.70:FF:000001">
    <property type="entry name" value="Arginine--tRNA ligase"/>
    <property type="match status" value="1"/>
</dbReference>
<dbReference type="FunFam" id="3.40.50.620:FF:000030">
    <property type="entry name" value="Arginine--tRNA ligase"/>
    <property type="match status" value="1"/>
</dbReference>
<dbReference type="Gene3D" id="3.30.1360.70">
    <property type="entry name" value="Arginyl tRNA synthetase N-terminal domain"/>
    <property type="match status" value="1"/>
</dbReference>
<dbReference type="Gene3D" id="3.40.50.620">
    <property type="entry name" value="HUPs"/>
    <property type="match status" value="1"/>
</dbReference>
<dbReference type="Gene3D" id="1.10.730.10">
    <property type="entry name" value="Isoleucyl-tRNA Synthetase, Domain 1"/>
    <property type="match status" value="1"/>
</dbReference>
<dbReference type="HAMAP" id="MF_00123">
    <property type="entry name" value="Arg_tRNA_synth"/>
    <property type="match status" value="1"/>
</dbReference>
<dbReference type="InterPro" id="IPR001412">
    <property type="entry name" value="aa-tRNA-synth_I_CS"/>
</dbReference>
<dbReference type="InterPro" id="IPR001278">
    <property type="entry name" value="Arg-tRNA-ligase"/>
</dbReference>
<dbReference type="InterPro" id="IPR005148">
    <property type="entry name" value="Arg-tRNA-synth_N"/>
</dbReference>
<dbReference type="InterPro" id="IPR036695">
    <property type="entry name" value="Arg-tRNA-synth_N_sf"/>
</dbReference>
<dbReference type="InterPro" id="IPR035684">
    <property type="entry name" value="ArgRS_core"/>
</dbReference>
<dbReference type="InterPro" id="IPR008909">
    <property type="entry name" value="DALR_anticod-bd"/>
</dbReference>
<dbReference type="InterPro" id="IPR014729">
    <property type="entry name" value="Rossmann-like_a/b/a_fold"/>
</dbReference>
<dbReference type="InterPro" id="IPR009080">
    <property type="entry name" value="tRNAsynth_Ia_anticodon-bd"/>
</dbReference>
<dbReference type="NCBIfam" id="TIGR00456">
    <property type="entry name" value="argS"/>
    <property type="match status" value="1"/>
</dbReference>
<dbReference type="PANTHER" id="PTHR11956:SF5">
    <property type="entry name" value="ARGININE--TRNA LIGASE, CYTOPLASMIC"/>
    <property type="match status" value="1"/>
</dbReference>
<dbReference type="PANTHER" id="PTHR11956">
    <property type="entry name" value="ARGINYL-TRNA SYNTHETASE"/>
    <property type="match status" value="1"/>
</dbReference>
<dbReference type="Pfam" id="PF03485">
    <property type="entry name" value="Arg_tRNA_synt_N"/>
    <property type="match status" value="1"/>
</dbReference>
<dbReference type="Pfam" id="PF05746">
    <property type="entry name" value="DALR_1"/>
    <property type="match status" value="1"/>
</dbReference>
<dbReference type="Pfam" id="PF00750">
    <property type="entry name" value="tRNA-synt_1d"/>
    <property type="match status" value="1"/>
</dbReference>
<dbReference type="PRINTS" id="PR01038">
    <property type="entry name" value="TRNASYNTHARG"/>
</dbReference>
<dbReference type="SMART" id="SM01016">
    <property type="entry name" value="Arg_tRNA_synt_N"/>
    <property type="match status" value="1"/>
</dbReference>
<dbReference type="SMART" id="SM00836">
    <property type="entry name" value="DALR_1"/>
    <property type="match status" value="1"/>
</dbReference>
<dbReference type="SUPFAM" id="SSF47323">
    <property type="entry name" value="Anticodon-binding domain of a subclass of class I aminoacyl-tRNA synthetases"/>
    <property type="match status" value="1"/>
</dbReference>
<dbReference type="SUPFAM" id="SSF55190">
    <property type="entry name" value="Arginyl-tRNA synthetase (ArgRS), N-terminal 'additional' domain"/>
    <property type="match status" value="1"/>
</dbReference>
<dbReference type="SUPFAM" id="SSF52374">
    <property type="entry name" value="Nucleotidylyl transferase"/>
    <property type="match status" value="1"/>
</dbReference>
<dbReference type="PROSITE" id="PS00178">
    <property type="entry name" value="AA_TRNA_LIGASE_I"/>
    <property type="match status" value="1"/>
</dbReference>
<reference key="1">
    <citation type="journal article" date="2009" name="BMC Genomics">
        <title>Pseudogene accumulation in the evolutionary histories of Salmonella enterica serovars Paratyphi A and Typhi.</title>
        <authorList>
            <person name="Holt K.E."/>
            <person name="Thomson N.R."/>
            <person name="Wain J."/>
            <person name="Langridge G.C."/>
            <person name="Hasan R."/>
            <person name="Bhutta Z.A."/>
            <person name="Quail M.A."/>
            <person name="Norbertczak H."/>
            <person name="Walker D."/>
            <person name="Simmonds M."/>
            <person name="White B."/>
            <person name="Bason N."/>
            <person name="Mungall K."/>
            <person name="Dougan G."/>
            <person name="Parkhill J."/>
        </authorList>
    </citation>
    <scope>NUCLEOTIDE SEQUENCE [LARGE SCALE GENOMIC DNA]</scope>
    <source>
        <strain>AKU_12601</strain>
    </source>
</reference>
<gene>
    <name evidence="1" type="primary">argS</name>
    <name type="ordered locus">SSPA0894</name>
</gene>
<proteinExistence type="inferred from homology"/>
<accession>B5BH46</accession>
<evidence type="ECO:0000255" key="1">
    <source>
        <dbReference type="HAMAP-Rule" id="MF_00123"/>
    </source>
</evidence>
<protein>
    <recommendedName>
        <fullName evidence="1">Arginine--tRNA ligase</fullName>
        <ecNumber evidence="1">6.1.1.19</ecNumber>
    </recommendedName>
    <alternativeName>
        <fullName evidence="1">Arginyl-tRNA synthetase</fullName>
        <shortName evidence="1">ArgRS</shortName>
    </alternativeName>
</protein>
<feature type="chain" id="PRO_1000095404" description="Arginine--tRNA ligase">
    <location>
        <begin position="1"/>
        <end position="577"/>
    </location>
</feature>
<feature type="short sequence motif" description="'HIGH' region">
    <location>
        <begin position="122"/>
        <end position="132"/>
    </location>
</feature>
<comment type="catalytic activity">
    <reaction evidence="1">
        <text>tRNA(Arg) + L-arginine + ATP = L-arginyl-tRNA(Arg) + AMP + diphosphate</text>
        <dbReference type="Rhea" id="RHEA:20301"/>
        <dbReference type="Rhea" id="RHEA-COMP:9658"/>
        <dbReference type="Rhea" id="RHEA-COMP:9673"/>
        <dbReference type="ChEBI" id="CHEBI:30616"/>
        <dbReference type="ChEBI" id="CHEBI:32682"/>
        <dbReference type="ChEBI" id="CHEBI:33019"/>
        <dbReference type="ChEBI" id="CHEBI:78442"/>
        <dbReference type="ChEBI" id="CHEBI:78513"/>
        <dbReference type="ChEBI" id="CHEBI:456215"/>
        <dbReference type="EC" id="6.1.1.19"/>
    </reaction>
</comment>
<comment type="subunit">
    <text evidence="1">Monomer.</text>
</comment>
<comment type="subcellular location">
    <subcellularLocation>
        <location evidence="1">Cytoplasm</location>
    </subcellularLocation>
</comment>
<comment type="similarity">
    <text evidence="1">Belongs to the class-I aminoacyl-tRNA synthetase family.</text>
</comment>
<name>SYR_SALPK</name>